<evidence type="ECO:0000255" key="1">
    <source>
        <dbReference type="HAMAP-Rule" id="MF_00446"/>
    </source>
</evidence>
<accession>B2RK28</accession>
<reference key="1">
    <citation type="journal article" date="2008" name="DNA Res.">
        <title>Determination of the genome sequence of Porphyromonas gingivalis strain ATCC 33277 and genomic comparison with strain W83 revealed extensive genome rearrangements in P. gingivalis.</title>
        <authorList>
            <person name="Naito M."/>
            <person name="Hirakawa H."/>
            <person name="Yamashita A."/>
            <person name="Ohara N."/>
            <person name="Shoji M."/>
            <person name="Yukitake H."/>
            <person name="Nakayama K."/>
            <person name="Toh H."/>
            <person name="Yoshimura F."/>
            <person name="Kuhara S."/>
            <person name="Hattori M."/>
            <person name="Hayashi T."/>
            <person name="Nakayama K."/>
        </authorList>
    </citation>
    <scope>NUCLEOTIDE SEQUENCE [LARGE SCALE GENOMIC DNA]</scope>
    <source>
        <strain>ATCC 33277 / DSM 20709 / CIP 103683 / JCM 12257 / NCTC 11834 / 2561</strain>
    </source>
</reference>
<keyword id="KW-0068">Autocatalytic cleavage</keyword>
<keyword id="KW-0963">Cytoplasm</keyword>
<keyword id="KW-0210">Decarboxylase</keyword>
<keyword id="KW-0456">Lyase</keyword>
<keyword id="KW-0566">Pantothenate biosynthesis</keyword>
<keyword id="KW-0670">Pyruvate</keyword>
<keyword id="KW-0704">Schiff base</keyword>
<keyword id="KW-0865">Zymogen</keyword>
<proteinExistence type="inferred from homology"/>
<feature type="chain" id="PRO_1000124853" description="Aspartate 1-decarboxylase beta chain" evidence="1">
    <location>
        <begin position="1"/>
        <end position="24"/>
    </location>
</feature>
<feature type="chain" id="PRO_1000124854" description="Aspartate 1-decarboxylase alpha chain" evidence="1">
    <location>
        <begin position="25"/>
        <end position="118"/>
    </location>
</feature>
<feature type="active site" description="Schiff-base intermediate with substrate; via pyruvic acid" evidence="1">
    <location>
        <position position="25"/>
    </location>
</feature>
<feature type="active site" description="Proton donor" evidence="1">
    <location>
        <position position="58"/>
    </location>
</feature>
<feature type="binding site" evidence="1">
    <location>
        <position position="57"/>
    </location>
    <ligand>
        <name>substrate</name>
    </ligand>
</feature>
<feature type="binding site" evidence="1">
    <location>
        <begin position="73"/>
        <end position="75"/>
    </location>
    <ligand>
        <name>substrate</name>
    </ligand>
</feature>
<feature type="modified residue" description="Pyruvic acid (Ser)" evidence="1">
    <location>
        <position position="25"/>
    </location>
</feature>
<protein>
    <recommendedName>
        <fullName evidence="1">Aspartate 1-decarboxylase</fullName>
        <ecNumber evidence="1">4.1.1.11</ecNumber>
    </recommendedName>
    <alternativeName>
        <fullName evidence="1">Aspartate alpha-decarboxylase</fullName>
    </alternativeName>
    <component>
        <recommendedName>
            <fullName evidence="1">Aspartate 1-decarboxylase beta chain</fullName>
        </recommendedName>
    </component>
    <component>
        <recommendedName>
            <fullName evidence="1">Aspartate 1-decarboxylase alpha chain</fullName>
        </recommendedName>
    </component>
</protein>
<dbReference type="EC" id="4.1.1.11" evidence="1"/>
<dbReference type="EMBL" id="AP009380">
    <property type="protein sequence ID" value="BAG33723.1"/>
    <property type="molecule type" value="Genomic_DNA"/>
</dbReference>
<dbReference type="RefSeq" id="WP_010956218.1">
    <property type="nucleotide sequence ID" value="NZ_CP025930.1"/>
</dbReference>
<dbReference type="SMR" id="B2RK28"/>
<dbReference type="GeneID" id="29256411"/>
<dbReference type="KEGG" id="pgn:PGN_1204"/>
<dbReference type="eggNOG" id="COG0853">
    <property type="taxonomic scope" value="Bacteria"/>
</dbReference>
<dbReference type="HOGENOM" id="CLU_115305_2_0_10"/>
<dbReference type="OrthoDB" id="9803983at2"/>
<dbReference type="BioCyc" id="PGIN431947:G1G2V-1378-MONOMER"/>
<dbReference type="UniPathway" id="UPA00028">
    <property type="reaction ID" value="UER00002"/>
</dbReference>
<dbReference type="Proteomes" id="UP000008842">
    <property type="component" value="Chromosome"/>
</dbReference>
<dbReference type="GO" id="GO:0005829">
    <property type="term" value="C:cytosol"/>
    <property type="evidence" value="ECO:0007669"/>
    <property type="project" value="TreeGrafter"/>
</dbReference>
<dbReference type="GO" id="GO:0004068">
    <property type="term" value="F:aspartate 1-decarboxylase activity"/>
    <property type="evidence" value="ECO:0007669"/>
    <property type="project" value="UniProtKB-UniRule"/>
</dbReference>
<dbReference type="GO" id="GO:0006523">
    <property type="term" value="P:alanine biosynthetic process"/>
    <property type="evidence" value="ECO:0007669"/>
    <property type="project" value="InterPro"/>
</dbReference>
<dbReference type="GO" id="GO:0015940">
    <property type="term" value="P:pantothenate biosynthetic process"/>
    <property type="evidence" value="ECO:0007669"/>
    <property type="project" value="UniProtKB-UniRule"/>
</dbReference>
<dbReference type="CDD" id="cd06919">
    <property type="entry name" value="Asp_decarbox"/>
    <property type="match status" value="1"/>
</dbReference>
<dbReference type="Gene3D" id="2.40.40.20">
    <property type="match status" value="1"/>
</dbReference>
<dbReference type="HAMAP" id="MF_00446">
    <property type="entry name" value="PanD"/>
    <property type="match status" value="1"/>
</dbReference>
<dbReference type="InterPro" id="IPR009010">
    <property type="entry name" value="Asp_de-COase-like_dom_sf"/>
</dbReference>
<dbReference type="InterPro" id="IPR003190">
    <property type="entry name" value="Asp_decarbox"/>
</dbReference>
<dbReference type="NCBIfam" id="TIGR00223">
    <property type="entry name" value="panD"/>
    <property type="match status" value="1"/>
</dbReference>
<dbReference type="PANTHER" id="PTHR21012">
    <property type="entry name" value="ASPARTATE 1-DECARBOXYLASE"/>
    <property type="match status" value="1"/>
</dbReference>
<dbReference type="PANTHER" id="PTHR21012:SF0">
    <property type="entry name" value="ASPARTATE 1-DECARBOXYLASE"/>
    <property type="match status" value="1"/>
</dbReference>
<dbReference type="Pfam" id="PF02261">
    <property type="entry name" value="Asp_decarbox"/>
    <property type="match status" value="1"/>
</dbReference>
<dbReference type="PIRSF" id="PIRSF006246">
    <property type="entry name" value="Asp_decarbox"/>
    <property type="match status" value="1"/>
</dbReference>
<dbReference type="SUPFAM" id="SSF50692">
    <property type="entry name" value="ADC-like"/>
    <property type="match status" value="1"/>
</dbReference>
<organism>
    <name type="scientific">Porphyromonas gingivalis (strain ATCC 33277 / DSM 20709 / CIP 103683 / JCM 12257 / NCTC 11834 / 2561)</name>
    <dbReference type="NCBI Taxonomy" id="431947"/>
    <lineage>
        <taxon>Bacteria</taxon>
        <taxon>Pseudomonadati</taxon>
        <taxon>Bacteroidota</taxon>
        <taxon>Bacteroidia</taxon>
        <taxon>Bacteroidales</taxon>
        <taxon>Porphyromonadaceae</taxon>
        <taxon>Porphyromonas</taxon>
    </lineage>
</organism>
<gene>
    <name evidence="1" type="primary">panD</name>
    <name type="ordered locus">PGN_1204</name>
</gene>
<comment type="function">
    <text evidence="1">Catalyzes the pyruvoyl-dependent decarboxylation of aspartate to produce beta-alanine.</text>
</comment>
<comment type="catalytic activity">
    <reaction evidence="1">
        <text>L-aspartate + H(+) = beta-alanine + CO2</text>
        <dbReference type="Rhea" id="RHEA:19497"/>
        <dbReference type="ChEBI" id="CHEBI:15378"/>
        <dbReference type="ChEBI" id="CHEBI:16526"/>
        <dbReference type="ChEBI" id="CHEBI:29991"/>
        <dbReference type="ChEBI" id="CHEBI:57966"/>
        <dbReference type="EC" id="4.1.1.11"/>
    </reaction>
</comment>
<comment type="cofactor">
    <cofactor evidence="1">
        <name>pyruvate</name>
        <dbReference type="ChEBI" id="CHEBI:15361"/>
    </cofactor>
    <text evidence="1">Binds 1 pyruvoyl group covalently per subunit.</text>
</comment>
<comment type="pathway">
    <text evidence="1">Cofactor biosynthesis; (R)-pantothenate biosynthesis; beta-alanine from L-aspartate: step 1/1.</text>
</comment>
<comment type="subunit">
    <text evidence="1">Heterooctamer of four alpha and four beta subunits.</text>
</comment>
<comment type="subcellular location">
    <subcellularLocation>
        <location evidence="1">Cytoplasm</location>
    </subcellularLocation>
</comment>
<comment type="PTM">
    <text evidence="1">Is synthesized initially as an inactive proenzyme, which is activated by self-cleavage at a specific serine bond to produce a beta-subunit with a hydroxyl group at its C-terminus and an alpha-subunit with a pyruvoyl group at its N-terminus.</text>
</comment>
<comment type="similarity">
    <text evidence="1">Belongs to the PanD family.</text>
</comment>
<sequence length="118" mass="12885">MYVEVLKSKIHRVTITEANLNYVGSITIDEDLMDAANIIAGEKVQIVDNNNGARLETYTIPGKRGSGVICLNGAAARIVHPGDIIIIMAYAWMPMEEAKVFKPAVVFPDTATNKIILK</sequence>
<name>PAND_PORG3</name>